<accession>Q9SWQ9</accession>
<proteinExistence type="evidence at protein level"/>
<gene>
    <name type="primary">efd1</name>
</gene>
<protein>
    <recommendedName>
        <fullName evidence="4">Delta(8)-fatty-acid desaturase</fullName>
        <shortName evidence="4">EFD1</shortName>
        <ecNumber evidence="7">1.14.19.4</ecNumber>
    </recommendedName>
    <alternativeName>
        <fullName>Acyl-lipid (11-3)-desaturase</fullName>
    </alternativeName>
    <alternativeName>
        <fullName>Delta(8)-sphingolipid desaturase</fullName>
    </alternativeName>
</protein>
<sequence length="419" mass="48457">MKSKRQALSPLQLMEQTYDVVNFHPGGAEIIENYQGRDATDAFMVMHFQEAFDKLKRMPKINPSFELPPQAAVNEAQEDFRKLREELIATGMFDASPLWYSYKISTTLGLGVLGYFLMVQYQMYFIGAVLLGMHYQQMGWLSHDICHHQTFKNRNWNNLVGLVFGNGLQGFSVTCWKDRHNAHHSATNVQGHDPDIDNLPPLAWSEDDVTRASPISRKLIQFQQYYFLVICILLRFIWCFQCVLTVRSLKDRDNQFYRSQYKKEAIGLALHWTLKALFHLFFMPSILTSLLVFFVSELVGGFGIAIVVFMNHYPLEKIGDPVWDGHGFSVGQIHETMNIRRGIITDWFFGGLNYQIEHHLWPTLPRHNLTAVSYQVEQLCQKHNLPYRNPLPHEGLVILLRYLAVFARMAEKQPAGKAL</sequence>
<feature type="chain" id="PRO_0000418894" description="Delta(8)-fatty-acid desaturase">
    <location>
        <begin position="1"/>
        <end position="419"/>
    </location>
</feature>
<feature type="transmembrane region" description="Helical" evidence="2">
    <location>
        <begin position="110"/>
        <end position="130"/>
    </location>
</feature>
<feature type="transmembrane region" description="Helical" evidence="2">
    <location>
        <begin position="156"/>
        <end position="176"/>
    </location>
</feature>
<feature type="transmembrane region" description="Helical" evidence="2">
    <location>
        <begin position="226"/>
        <end position="246"/>
    </location>
</feature>
<feature type="transmembrane region" description="Helical" evidence="2">
    <location>
        <begin position="266"/>
        <end position="286"/>
    </location>
</feature>
<feature type="transmembrane region" description="Helical" evidence="2">
    <location>
        <begin position="290"/>
        <end position="310"/>
    </location>
</feature>
<feature type="domain" description="Cytochrome b5 heme-binding">
    <location>
        <begin position="1"/>
        <end position="64"/>
    </location>
</feature>
<feature type="short sequence motif" description="Histidine box-1" evidence="6">
    <location>
        <begin position="143"/>
        <end position="147"/>
    </location>
</feature>
<feature type="short sequence motif" description="Histidine box-2" evidence="6">
    <location>
        <begin position="180"/>
        <end position="184"/>
    </location>
</feature>
<feature type="short sequence motif" description="Histidine box-3" evidence="6">
    <location>
        <begin position="355"/>
        <end position="359"/>
    </location>
</feature>
<feature type="binding site" description="axial binding residue" evidence="1">
    <location>
        <position position="24"/>
    </location>
    <ligand>
        <name>heme</name>
        <dbReference type="ChEBI" id="CHEBI:30413"/>
    </ligand>
    <ligandPart>
        <name>Fe</name>
        <dbReference type="ChEBI" id="CHEBI:18248"/>
    </ligandPart>
</feature>
<feature type="binding site" description="axial binding residue" evidence="1">
    <location>
        <position position="47"/>
    </location>
    <ligand>
        <name>heme</name>
        <dbReference type="ChEBI" id="CHEBI:30413"/>
    </ligand>
    <ligandPart>
        <name>Fe</name>
        <dbReference type="ChEBI" id="CHEBI:18248"/>
    </ligandPart>
</feature>
<evidence type="ECO:0000250" key="1"/>
<evidence type="ECO:0000255" key="2"/>
<evidence type="ECO:0000269" key="3">
    <source>
    </source>
</evidence>
<evidence type="ECO:0000303" key="4">
    <source>
    </source>
</evidence>
<evidence type="ECO:0000303" key="5">
    <source>
    </source>
</evidence>
<evidence type="ECO:0000305" key="6"/>
<evidence type="ECO:0000305" key="7">
    <source>
    </source>
</evidence>
<evidence type="ECO:0000305" key="8">
    <source>
    </source>
</evidence>
<name>SLD1_EUGGR</name>
<comment type="function">
    <text evidence="3 8">Delta(8)-fatty-acid desaturase which introduces a double bond at the 8-position in 20-carbon chain length fatty acids (C20) that have an existing delta-11 unsaturation (double bond) (PubMed:10328826). Whether it acts on CoA-linked substrates (as in animals) or phospholipid-linked substrates (as in plants and fungi) is still not clear (Probable).</text>
</comment>
<comment type="catalytic activity">
    <reaction evidence="7">
        <text>an (11Z,14Z)-icosadienoyl-containing glycerolipid + 2 Fe(II)-[cytochrome b5] + O2 + 2 H(+) = an (8Z,11Z,14Z)-icosatrienoyl-containing glycerolipid + 2 Fe(III)-[cytochrome b5] + 2 H2O</text>
        <dbReference type="Rhea" id="RHEA:46792"/>
        <dbReference type="Rhea" id="RHEA-COMP:10438"/>
        <dbReference type="Rhea" id="RHEA-COMP:10439"/>
        <dbReference type="ChEBI" id="CHEBI:15377"/>
        <dbReference type="ChEBI" id="CHEBI:15378"/>
        <dbReference type="ChEBI" id="CHEBI:15379"/>
        <dbReference type="ChEBI" id="CHEBI:29033"/>
        <dbReference type="ChEBI" id="CHEBI:29034"/>
        <dbReference type="ChEBI" id="CHEBI:88252"/>
        <dbReference type="ChEBI" id="CHEBI:90076"/>
        <dbReference type="EC" id="1.14.19.4"/>
    </reaction>
    <physiologicalReaction direction="left-to-right" evidence="7">
        <dbReference type="Rhea" id="RHEA:46793"/>
    </physiologicalReaction>
</comment>
<comment type="catalytic activity">
    <reaction evidence="7">
        <text>an (11Z,14Z,17Z)-icosatrienoyl-containing glycerolipid + 2 Fe(II)-[cytochrome b5] + O2 + 2 H(+) = an (8Z,11Z,14Z,17Z)-eicosatetraenoyl-containing glycerolipid + 2 Fe(III)-[cytochrome b5] + 2 H2O</text>
        <dbReference type="Rhea" id="RHEA:46796"/>
        <dbReference type="Rhea" id="RHEA-COMP:10438"/>
        <dbReference type="Rhea" id="RHEA-COMP:10439"/>
        <dbReference type="ChEBI" id="CHEBI:15377"/>
        <dbReference type="ChEBI" id="CHEBI:15378"/>
        <dbReference type="ChEBI" id="CHEBI:15379"/>
        <dbReference type="ChEBI" id="CHEBI:29033"/>
        <dbReference type="ChEBI" id="CHEBI:29034"/>
        <dbReference type="ChEBI" id="CHEBI:88253"/>
        <dbReference type="ChEBI" id="CHEBI:90082"/>
        <dbReference type="EC" id="1.14.19.4"/>
    </reaction>
    <physiologicalReaction direction="left-to-right" evidence="7">
        <dbReference type="Rhea" id="RHEA:46797"/>
    </physiologicalReaction>
</comment>
<comment type="catalytic activity">
    <reaction evidence="7">
        <text>an (11Z)-eicosenoyl-containing glycerolipid + 2 Fe(II)-[cytochrome b5] + O2 + 2 H(+) = a (8Z,11Z)-eicosadienoyl-containing glycerolipid + 2 Fe(III)-[cytochrome b5] + 2 H2O</text>
        <dbReference type="Rhea" id="RHEA:67660"/>
        <dbReference type="Rhea" id="RHEA-COMP:10438"/>
        <dbReference type="Rhea" id="RHEA-COMP:10439"/>
        <dbReference type="ChEBI" id="CHEBI:15377"/>
        <dbReference type="ChEBI" id="CHEBI:15378"/>
        <dbReference type="ChEBI" id="CHEBI:15379"/>
        <dbReference type="ChEBI" id="CHEBI:29033"/>
        <dbReference type="ChEBI" id="CHEBI:29034"/>
        <dbReference type="ChEBI" id="CHEBI:172956"/>
        <dbReference type="ChEBI" id="CHEBI:172957"/>
    </reaction>
    <physiologicalReaction direction="left-to-right" evidence="7">
        <dbReference type="Rhea" id="RHEA:67661"/>
    </physiologicalReaction>
</comment>
<comment type="cofactor">
    <cofactor evidence="1">
        <name>Fe cation</name>
        <dbReference type="ChEBI" id="CHEBI:24875"/>
    </cofactor>
</comment>
<comment type="pathway">
    <text evidence="7">Lipid metabolism; fatty acid metabolism.</text>
</comment>
<comment type="subcellular location">
    <subcellularLocation>
        <location evidence="6">Membrane</location>
        <topology evidence="6">Multi-pass membrane protein</topology>
    </subcellularLocation>
</comment>
<comment type="domain">
    <text evidence="1">The histidine box domains may contain the active site and/or be involved in metal ion binding.</text>
</comment>
<comment type="miscellaneous">
    <text evidence="5">Euglena gracilis exhibits the metabolic behavior of a plant in the light and of an animal in the dark. Grown in the dark, this organism contains large amounts of 20-carbon chain length (C20) polyunsaturated fatty acids (PUFA), including arachidonic acid (C20:4n-6), and little or no C18 PUFAs (such as linolenic acid, C18:3). On the other hand, when grown under photoauxotrophic conditions, this organism is rich in linolenic acid and contain relatively small amounts of the C20 PUFAs.</text>
</comment>
<comment type="similarity">
    <text evidence="6">Belongs to the fatty acid desaturase type 1 family.</text>
</comment>
<keyword id="KW-0249">Electron transport</keyword>
<keyword id="KW-0349">Heme</keyword>
<keyword id="KW-0408">Iron</keyword>
<keyword id="KW-0443">Lipid metabolism</keyword>
<keyword id="KW-0472">Membrane</keyword>
<keyword id="KW-0479">Metal-binding</keyword>
<keyword id="KW-0560">Oxidoreductase</keyword>
<keyword id="KW-0746">Sphingolipid metabolism</keyword>
<keyword id="KW-0812">Transmembrane</keyword>
<keyword id="KW-1133">Transmembrane helix</keyword>
<keyword id="KW-0813">Transport</keyword>
<dbReference type="EC" id="1.14.19.4" evidence="7"/>
<dbReference type="EMBL" id="AF139720">
    <property type="protein sequence ID" value="AAD45877.1"/>
    <property type="molecule type" value="mRNA"/>
</dbReference>
<dbReference type="SwissLipids" id="SLP:000000806"/>
<dbReference type="KEGG" id="ag:AAD45877"/>
<dbReference type="BioCyc" id="MetaCyc:MONOMER-16975"/>
<dbReference type="BRENDA" id="1.14.19.4">
    <property type="organism ID" value="2197"/>
</dbReference>
<dbReference type="UniPathway" id="UPA00199"/>
<dbReference type="GO" id="GO:0016020">
    <property type="term" value="C:membrane"/>
    <property type="evidence" value="ECO:0007669"/>
    <property type="project" value="UniProtKB-SubCell"/>
</dbReference>
<dbReference type="GO" id="GO:0102003">
    <property type="term" value="F:acyl-lipid (11-3)-desaturase activity"/>
    <property type="evidence" value="ECO:0007669"/>
    <property type="project" value="UniProtKB-EC"/>
</dbReference>
<dbReference type="GO" id="GO:0046872">
    <property type="term" value="F:metal ion binding"/>
    <property type="evidence" value="ECO:0007669"/>
    <property type="project" value="UniProtKB-KW"/>
</dbReference>
<dbReference type="GO" id="GO:0006631">
    <property type="term" value="P:fatty acid metabolic process"/>
    <property type="evidence" value="ECO:0007669"/>
    <property type="project" value="UniProtKB-UniPathway"/>
</dbReference>
<dbReference type="GO" id="GO:0006665">
    <property type="term" value="P:sphingolipid metabolic process"/>
    <property type="evidence" value="ECO:0007669"/>
    <property type="project" value="UniProtKB-KW"/>
</dbReference>
<dbReference type="CDD" id="cd03506">
    <property type="entry name" value="Delta6-FADS-like"/>
    <property type="match status" value="1"/>
</dbReference>
<dbReference type="Gene3D" id="3.10.120.10">
    <property type="entry name" value="Cytochrome b5-like heme/steroid binding domain"/>
    <property type="match status" value="1"/>
</dbReference>
<dbReference type="InterPro" id="IPR001199">
    <property type="entry name" value="Cyt_B5-like_heme/steroid-bd"/>
</dbReference>
<dbReference type="InterPro" id="IPR036400">
    <property type="entry name" value="Cyt_B5-like_heme/steroid_sf"/>
</dbReference>
<dbReference type="InterPro" id="IPR005804">
    <property type="entry name" value="FA_desaturase_dom"/>
</dbReference>
<dbReference type="InterPro" id="IPR012171">
    <property type="entry name" value="Fatty_acid_desaturase"/>
</dbReference>
<dbReference type="PANTHER" id="PTHR19353:SF88">
    <property type="entry name" value="DELTA(5) FATTY ACID DESATURASE FAT-4"/>
    <property type="match status" value="1"/>
</dbReference>
<dbReference type="PANTHER" id="PTHR19353">
    <property type="entry name" value="FATTY ACID DESATURASE 2"/>
    <property type="match status" value="1"/>
</dbReference>
<dbReference type="Pfam" id="PF00173">
    <property type="entry name" value="Cyt-b5"/>
    <property type="match status" value="1"/>
</dbReference>
<dbReference type="Pfam" id="PF00487">
    <property type="entry name" value="FA_desaturase"/>
    <property type="match status" value="1"/>
</dbReference>
<dbReference type="PIRSF" id="PIRSF015921">
    <property type="entry name" value="FA_sphinglp_des"/>
    <property type="match status" value="1"/>
</dbReference>
<dbReference type="SUPFAM" id="SSF55856">
    <property type="entry name" value="Cytochrome b5-like heme/steroid binding domain"/>
    <property type="match status" value="1"/>
</dbReference>
<reference key="1">
    <citation type="journal article" date="1999" name="Arch. Biochem. Biophys.">
        <title>The Delta8-desaturase of Euglena gracilis: an alternate pathway for synthesis of 20-carbon polyunsaturated fatty acids.</title>
        <authorList>
            <person name="Wallis J.G."/>
            <person name="Browse J."/>
        </authorList>
    </citation>
    <scope>NUCLEOTIDE SEQUENCE [MRNA]</scope>
    <scope>CATALYTIC ACTIVITY</scope>
    <scope>FUNCTION</scope>
</reference>
<reference key="2">
    <citation type="journal article" date="1964" name="J. Biol. Chem.">
        <title>LIPID METABOLISM OF EUGLENA GRACILIS.</title>
        <authorList>
            <person name="Hulanicka D."/>
            <person name="Erwin J."/>
            <person name="Bloch K."/>
        </authorList>
    </citation>
    <scope>MISCELLANEOUS</scope>
</reference>
<reference key="3">
    <citation type="journal article" date="2012" name="Lipids">
        <title>The front-end desaturase: structure, function, evolution and biotechnological use.</title>
        <authorList>
            <person name="Meesapyodsuk D."/>
            <person name="Qiu X."/>
        </authorList>
    </citation>
    <scope>FUNCTION</scope>
</reference>
<organism>
    <name type="scientific">Euglena gracilis</name>
    <dbReference type="NCBI Taxonomy" id="3039"/>
    <lineage>
        <taxon>Eukaryota</taxon>
        <taxon>Discoba</taxon>
        <taxon>Euglenozoa</taxon>
        <taxon>Euglenida</taxon>
        <taxon>Spirocuta</taxon>
        <taxon>Euglenophyceae</taxon>
        <taxon>Euglenales</taxon>
        <taxon>Euglenaceae</taxon>
        <taxon>Euglena</taxon>
    </lineage>
</organism>